<dbReference type="EC" id="3.5.4.25" evidence="1"/>
<dbReference type="EMBL" id="AE016826">
    <property type="protein sequence ID" value="AAO26979.1"/>
    <property type="molecule type" value="Genomic_DNA"/>
</dbReference>
<dbReference type="RefSeq" id="WP_011091380.1">
    <property type="nucleotide sequence ID" value="NC_004545.1"/>
</dbReference>
<dbReference type="SMR" id="P59555"/>
<dbReference type="STRING" id="224915.bbp_252"/>
<dbReference type="KEGG" id="bab:bbp_252"/>
<dbReference type="eggNOG" id="COG0807">
    <property type="taxonomic scope" value="Bacteria"/>
</dbReference>
<dbReference type="HOGENOM" id="CLU_020273_2_1_6"/>
<dbReference type="OrthoDB" id="9793111at2"/>
<dbReference type="UniPathway" id="UPA00275">
    <property type="reaction ID" value="UER00400"/>
</dbReference>
<dbReference type="Proteomes" id="UP000000601">
    <property type="component" value="Chromosome"/>
</dbReference>
<dbReference type="GO" id="GO:0005829">
    <property type="term" value="C:cytosol"/>
    <property type="evidence" value="ECO:0007669"/>
    <property type="project" value="TreeGrafter"/>
</dbReference>
<dbReference type="GO" id="GO:0005525">
    <property type="term" value="F:GTP binding"/>
    <property type="evidence" value="ECO:0007669"/>
    <property type="project" value="UniProtKB-KW"/>
</dbReference>
<dbReference type="GO" id="GO:0003935">
    <property type="term" value="F:GTP cyclohydrolase II activity"/>
    <property type="evidence" value="ECO:0007669"/>
    <property type="project" value="UniProtKB-UniRule"/>
</dbReference>
<dbReference type="GO" id="GO:0008270">
    <property type="term" value="F:zinc ion binding"/>
    <property type="evidence" value="ECO:0007669"/>
    <property type="project" value="UniProtKB-UniRule"/>
</dbReference>
<dbReference type="GO" id="GO:0009231">
    <property type="term" value="P:riboflavin biosynthetic process"/>
    <property type="evidence" value="ECO:0007669"/>
    <property type="project" value="UniProtKB-UniRule"/>
</dbReference>
<dbReference type="CDD" id="cd00641">
    <property type="entry name" value="GTP_cyclohydro2"/>
    <property type="match status" value="1"/>
</dbReference>
<dbReference type="FunFam" id="3.40.50.10990:FF:000002">
    <property type="entry name" value="GTP cyclohydrolase-2"/>
    <property type="match status" value="1"/>
</dbReference>
<dbReference type="Gene3D" id="3.40.50.10990">
    <property type="entry name" value="GTP cyclohydrolase II"/>
    <property type="match status" value="1"/>
</dbReference>
<dbReference type="HAMAP" id="MF_00179">
    <property type="entry name" value="RibA"/>
    <property type="match status" value="1"/>
</dbReference>
<dbReference type="InterPro" id="IPR032677">
    <property type="entry name" value="GTP_cyclohydro_II"/>
</dbReference>
<dbReference type="InterPro" id="IPR000926">
    <property type="entry name" value="RibA"/>
</dbReference>
<dbReference type="InterPro" id="IPR036144">
    <property type="entry name" value="RibA-like_sf"/>
</dbReference>
<dbReference type="NCBIfam" id="NF001591">
    <property type="entry name" value="PRK00393.1"/>
    <property type="match status" value="1"/>
</dbReference>
<dbReference type="NCBIfam" id="TIGR00505">
    <property type="entry name" value="ribA"/>
    <property type="match status" value="1"/>
</dbReference>
<dbReference type="PANTHER" id="PTHR21327:SF18">
    <property type="entry name" value="3,4-DIHYDROXY-2-BUTANONE 4-PHOSPHATE SYNTHASE"/>
    <property type="match status" value="1"/>
</dbReference>
<dbReference type="PANTHER" id="PTHR21327">
    <property type="entry name" value="GTP CYCLOHYDROLASE II-RELATED"/>
    <property type="match status" value="1"/>
</dbReference>
<dbReference type="Pfam" id="PF00925">
    <property type="entry name" value="GTP_cyclohydro2"/>
    <property type="match status" value="1"/>
</dbReference>
<dbReference type="SUPFAM" id="SSF142695">
    <property type="entry name" value="RibA-like"/>
    <property type="match status" value="1"/>
</dbReference>
<gene>
    <name evidence="1" type="primary">ribA</name>
    <name type="ordered locus">bbp_252</name>
</gene>
<feature type="chain" id="PRO_0000151752" description="GTP cyclohydrolase-2">
    <location>
        <begin position="1"/>
        <end position="199"/>
    </location>
</feature>
<feature type="active site" description="Proton acceptor" evidence="1">
    <location>
        <position position="127"/>
    </location>
</feature>
<feature type="active site" description="Nucleophile" evidence="1">
    <location>
        <position position="129"/>
    </location>
</feature>
<feature type="binding site" evidence="1">
    <location>
        <begin position="50"/>
        <end position="54"/>
    </location>
    <ligand>
        <name>GTP</name>
        <dbReference type="ChEBI" id="CHEBI:37565"/>
    </ligand>
</feature>
<feature type="binding site" evidence="1">
    <location>
        <position position="55"/>
    </location>
    <ligand>
        <name>Zn(2+)</name>
        <dbReference type="ChEBI" id="CHEBI:29105"/>
        <note>catalytic</note>
    </ligand>
</feature>
<feature type="binding site" evidence="1">
    <location>
        <position position="66"/>
    </location>
    <ligand>
        <name>Zn(2+)</name>
        <dbReference type="ChEBI" id="CHEBI:29105"/>
        <note>catalytic</note>
    </ligand>
</feature>
<feature type="binding site" evidence="1">
    <location>
        <position position="68"/>
    </location>
    <ligand>
        <name>Zn(2+)</name>
        <dbReference type="ChEBI" id="CHEBI:29105"/>
        <note>catalytic</note>
    </ligand>
</feature>
<feature type="binding site" evidence="1">
    <location>
        <position position="71"/>
    </location>
    <ligand>
        <name>GTP</name>
        <dbReference type="ChEBI" id="CHEBI:37565"/>
    </ligand>
</feature>
<feature type="binding site" evidence="1">
    <location>
        <begin position="93"/>
        <end position="95"/>
    </location>
    <ligand>
        <name>GTP</name>
        <dbReference type="ChEBI" id="CHEBI:37565"/>
    </ligand>
</feature>
<feature type="binding site" evidence="1">
    <location>
        <position position="115"/>
    </location>
    <ligand>
        <name>GTP</name>
        <dbReference type="ChEBI" id="CHEBI:37565"/>
    </ligand>
</feature>
<feature type="binding site" evidence="1">
    <location>
        <position position="150"/>
    </location>
    <ligand>
        <name>GTP</name>
        <dbReference type="ChEBI" id="CHEBI:37565"/>
    </ligand>
</feature>
<feature type="binding site" evidence="1">
    <location>
        <position position="155"/>
    </location>
    <ligand>
        <name>GTP</name>
        <dbReference type="ChEBI" id="CHEBI:37565"/>
    </ligand>
</feature>
<evidence type="ECO:0000255" key="1">
    <source>
        <dbReference type="HAMAP-Rule" id="MF_00179"/>
    </source>
</evidence>
<accession>P59555</accession>
<reference key="1">
    <citation type="journal article" date="2003" name="Proc. Natl. Acad. Sci. U.S.A.">
        <title>Reductive genome evolution in Buchnera aphidicola.</title>
        <authorList>
            <person name="van Ham R.C.H.J."/>
            <person name="Kamerbeek J."/>
            <person name="Palacios C."/>
            <person name="Rausell C."/>
            <person name="Abascal F."/>
            <person name="Bastolla U."/>
            <person name="Fernandez J.M."/>
            <person name="Jimenez L."/>
            <person name="Postigo M."/>
            <person name="Silva F.J."/>
            <person name="Tamames J."/>
            <person name="Viguera E."/>
            <person name="Latorre A."/>
            <person name="Valencia A."/>
            <person name="Moran F."/>
            <person name="Moya A."/>
        </authorList>
    </citation>
    <scope>NUCLEOTIDE SEQUENCE [LARGE SCALE GENOMIC DNA]</scope>
    <source>
        <strain>Bp</strain>
    </source>
</reference>
<protein>
    <recommendedName>
        <fullName evidence="1">GTP cyclohydrolase-2</fullName>
        <ecNumber evidence="1">3.5.4.25</ecNumber>
    </recommendedName>
    <alternativeName>
        <fullName evidence="1">GTP cyclohydrolase II</fullName>
    </alternativeName>
</protein>
<sequence length="199" mass="22287">MKLTKISEAKLPTSFGEFLMIVFEESKTDKNHIALVYGDIKDTNNSVLSRIHSECLTGDALFSIRCDCGFQLKSALMEIVKEGSGILIYHRQEGRNIGLSNKIRAYALQDIGLDTVEANHHLGFSADERDFSVCIDIFNTLNIKKIKLLTNNPSKVTVLNNAGIQITERISLIVGRNAKNSKYLNTKAHKMGHFLPIEY</sequence>
<proteinExistence type="inferred from homology"/>
<keyword id="KW-0342">GTP-binding</keyword>
<keyword id="KW-0378">Hydrolase</keyword>
<keyword id="KW-0479">Metal-binding</keyword>
<keyword id="KW-0547">Nucleotide-binding</keyword>
<keyword id="KW-1185">Reference proteome</keyword>
<keyword id="KW-0686">Riboflavin biosynthesis</keyword>
<keyword id="KW-0862">Zinc</keyword>
<name>RIBA_BUCBP</name>
<organism>
    <name type="scientific">Buchnera aphidicola subsp. Baizongia pistaciae (strain Bp)</name>
    <dbReference type="NCBI Taxonomy" id="224915"/>
    <lineage>
        <taxon>Bacteria</taxon>
        <taxon>Pseudomonadati</taxon>
        <taxon>Pseudomonadota</taxon>
        <taxon>Gammaproteobacteria</taxon>
        <taxon>Enterobacterales</taxon>
        <taxon>Erwiniaceae</taxon>
        <taxon>Buchnera</taxon>
    </lineage>
</organism>
<comment type="function">
    <text evidence="1">Catalyzes the conversion of GTP to 2,5-diamino-6-ribosylamino-4(3H)-pyrimidinone 5'-phosphate (DARP), formate and pyrophosphate.</text>
</comment>
<comment type="catalytic activity">
    <reaction evidence="1">
        <text>GTP + 4 H2O = 2,5-diamino-6-hydroxy-4-(5-phosphoribosylamino)-pyrimidine + formate + 2 phosphate + 3 H(+)</text>
        <dbReference type="Rhea" id="RHEA:23704"/>
        <dbReference type="ChEBI" id="CHEBI:15377"/>
        <dbReference type="ChEBI" id="CHEBI:15378"/>
        <dbReference type="ChEBI" id="CHEBI:15740"/>
        <dbReference type="ChEBI" id="CHEBI:37565"/>
        <dbReference type="ChEBI" id="CHEBI:43474"/>
        <dbReference type="ChEBI" id="CHEBI:58614"/>
        <dbReference type="EC" id="3.5.4.25"/>
    </reaction>
</comment>
<comment type="cofactor">
    <cofactor evidence="1">
        <name>Zn(2+)</name>
        <dbReference type="ChEBI" id="CHEBI:29105"/>
    </cofactor>
    <text evidence="1">Binds 1 zinc ion per subunit.</text>
</comment>
<comment type="pathway">
    <text evidence="1">Cofactor biosynthesis; riboflavin biosynthesis; 5-amino-6-(D-ribitylamino)uracil from GTP: step 1/4.</text>
</comment>
<comment type="subunit">
    <text evidence="1">Homodimer.</text>
</comment>
<comment type="similarity">
    <text evidence="1">Belongs to the GTP cyclohydrolase II family.</text>
</comment>